<accession>C4R8C9</accession>
<evidence type="ECO:0000250" key="1"/>
<evidence type="ECO:0000255" key="2"/>
<evidence type="ECO:0000256" key="3">
    <source>
        <dbReference type="SAM" id="MobiDB-lite"/>
    </source>
</evidence>
<evidence type="ECO:0000305" key="4"/>
<gene>
    <name type="primary">AIM23</name>
    <name type="ordered locus">PAS_chr4_0594</name>
</gene>
<name>AIM23_KOMPG</name>
<dbReference type="EMBL" id="FN392322">
    <property type="protein sequence ID" value="CAY71854.1"/>
    <property type="molecule type" value="Genomic_DNA"/>
</dbReference>
<dbReference type="RefSeq" id="XP_002494033.1">
    <property type="nucleotide sequence ID" value="XM_002493988.1"/>
</dbReference>
<dbReference type="SMR" id="C4R8C9"/>
<dbReference type="FunCoup" id="C4R8C9">
    <property type="interactions" value="34"/>
</dbReference>
<dbReference type="EnsemblFungi" id="CAY71854">
    <property type="protein sequence ID" value="CAY71854"/>
    <property type="gene ID" value="PAS_chr4_0594"/>
</dbReference>
<dbReference type="GeneID" id="8200859"/>
<dbReference type="KEGG" id="ppa:PAS_chr4_0594"/>
<dbReference type="eggNOG" id="ENOG502RY27">
    <property type="taxonomic scope" value="Eukaryota"/>
</dbReference>
<dbReference type="HOGENOM" id="CLU_834484_0_0_1"/>
<dbReference type="InParanoid" id="C4R8C9"/>
<dbReference type="OMA" id="KVSWQIS"/>
<dbReference type="OrthoDB" id="3996489at2759"/>
<dbReference type="Proteomes" id="UP000000314">
    <property type="component" value="Chromosome 4"/>
</dbReference>
<dbReference type="GO" id="GO:0005739">
    <property type="term" value="C:mitochondrion"/>
    <property type="evidence" value="ECO:0007669"/>
    <property type="project" value="UniProtKB-SubCell"/>
</dbReference>
<dbReference type="InterPro" id="IPR029427">
    <property type="entry name" value="AIM23"/>
</dbReference>
<dbReference type="Pfam" id="PF14877">
    <property type="entry name" value="mIF3"/>
    <property type="match status" value="1"/>
</dbReference>
<feature type="transit peptide" description="Mitochondrion" evidence="2">
    <location>
        <begin position="1"/>
        <end position="28"/>
    </location>
</feature>
<feature type="chain" id="PRO_0000399540" description="Altered inheritance of mitochondria protein 23, mitochondrial">
    <location>
        <begin position="29"/>
        <end position="333"/>
    </location>
</feature>
<feature type="region of interest" description="Disordered" evidence="3">
    <location>
        <begin position="43"/>
        <end position="80"/>
    </location>
</feature>
<feature type="region of interest" description="Disordered" evidence="3">
    <location>
        <begin position="296"/>
        <end position="333"/>
    </location>
</feature>
<feature type="compositionally biased region" description="Basic and acidic residues" evidence="3">
    <location>
        <begin position="71"/>
        <end position="80"/>
    </location>
</feature>
<feature type="compositionally biased region" description="Basic and acidic residues" evidence="3">
    <location>
        <begin position="297"/>
        <end position="333"/>
    </location>
</feature>
<keyword id="KW-0496">Mitochondrion</keyword>
<keyword id="KW-1185">Reference proteome</keyword>
<keyword id="KW-0809">Transit peptide</keyword>
<reference key="1">
    <citation type="journal article" date="2009" name="Nat. Biotechnol.">
        <title>Genome sequence of the recombinant protein production host Pichia pastoris.</title>
        <authorList>
            <person name="De Schutter K."/>
            <person name="Lin Y.-C."/>
            <person name="Tiels P."/>
            <person name="Van Hecke A."/>
            <person name="Glinka S."/>
            <person name="Weber-Lehmann J."/>
            <person name="Rouze P."/>
            <person name="Van de Peer Y."/>
            <person name="Callewaert N."/>
        </authorList>
    </citation>
    <scope>NUCLEOTIDE SEQUENCE [LARGE SCALE GENOMIC DNA]</scope>
    <source>
        <strain>GS115 / ATCC 20864</strain>
    </source>
</reference>
<comment type="subcellular location">
    <subcellularLocation>
        <location evidence="1">Mitochondrion</location>
    </subcellularLocation>
</comment>
<comment type="similarity">
    <text evidence="4">Belongs to the AIM23 family.</text>
</comment>
<protein>
    <recommendedName>
        <fullName>Altered inheritance of mitochondria protein 23, mitochondrial</fullName>
    </recommendedName>
</protein>
<sequence>MFRQIPKFSVIRASCFASRCFYSSKSSNATYIASLLAEYDKTTNRSKKPRLKSRNDPKPSFKGAKAKKPDRHINQTGKERDREALKVVLDEVQSKYKSNNAIVILPTGNLEETQLSKTSLTLNLDEHGLQVVGEKKDSKGRSVPLVKVVDRQTAIKNYSDYLHQQVTRKFSSSFRKAINTSNVANKDPWKVIKVSWNISPQDLASQKCNEIEQMLNKGQNVYILIGSKGVINKSIDNPEDLFNEQHKREVSLDDIEALRRQKIVDTLDSMLETLPTSSIGNDGSISDKIIYKIKAQPKKDDKDEKKRLKELKKQERQEKIRLRTEKKRAESKA</sequence>
<organism>
    <name type="scientific">Komagataella phaffii (strain GS115 / ATCC 20864)</name>
    <name type="common">Yeast</name>
    <name type="synonym">Pichia pastoris</name>
    <dbReference type="NCBI Taxonomy" id="644223"/>
    <lineage>
        <taxon>Eukaryota</taxon>
        <taxon>Fungi</taxon>
        <taxon>Dikarya</taxon>
        <taxon>Ascomycota</taxon>
        <taxon>Saccharomycotina</taxon>
        <taxon>Pichiomycetes</taxon>
        <taxon>Pichiales</taxon>
        <taxon>Pichiaceae</taxon>
        <taxon>Komagataella</taxon>
    </lineage>
</organism>
<proteinExistence type="inferred from homology"/>